<reference key="1">
    <citation type="journal article" date="2000" name="Proc. Natl. Acad. Sci. U.S.A.">
        <title>Homologs of the yeast Sec complex subunits Sec62p and Sec63p are abundant proteins in dog pancreas microsomes.</title>
        <authorList>
            <person name="Tyedmers J."/>
            <person name="Lerner M."/>
            <person name="Bies C."/>
            <person name="Dudek J."/>
            <person name="Skowronek M.H."/>
            <person name="Haas I.G."/>
            <person name="Heim N."/>
            <person name="Nastainczyk W."/>
            <person name="Volkmer J."/>
            <person name="Zimmermann R."/>
        </authorList>
    </citation>
    <scope>PROTEIN SEQUENCE</scope>
    <scope>SUBUNIT</scope>
    <source>
        <tissue>Pancreas</tissue>
    </source>
</reference>
<sequence length="33" mass="3802">AGQQFQYDDSGNTFFYQMAEVFEKEQSIXAAXE</sequence>
<gene>
    <name type="primary">SEC63</name>
    <name type="synonym">DNAJC23</name>
    <name type="synonym">SEC63L</name>
</gene>
<comment type="function">
    <text evidence="1 2">Mediates cotranslational and post-translational transport of certain precursor polypeptides across endoplasmic reticulum (ER). Proposed to play an auxiliary role in recognition of precursors with short and apolar signal peptides. May cooperate with SEC62 and HSPA5/BiP to facilitate targeting of small presecretory proteins into the SEC61 channel-forming translocon complex, triggering channel opening for polypeptide translocation to the ER lumen (By similarity). Required for efficient PKD1/Polycystin-1 biogenesis and trafficking to the plasma membrane of the primary cilia (By similarity).</text>
</comment>
<comment type="subunit">
    <text evidence="3">The ER translocon complex consists of channel-forming core components SEC61A1, SEC61B and SEC61G and different auxiliary components such as SEC62 and SEC63.</text>
</comment>
<comment type="subcellular location">
    <subcellularLocation>
        <location>Endoplasmic reticulum membrane</location>
        <topology>Multi-pass membrane protein</topology>
    </subcellularLocation>
</comment>
<comment type="tissue specificity">
    <text>Pancreas.</text>
</comment>
<protein>
    <recommendedName>
        <fullName>Translocation protein SEC63 homolog</fullName>
    </recommendedName>
    <alternativeName>
        <fullName>DnaJ homolog subfamily C member 23</fullName>
    </alternativeName>
</protein>
<keyword id="KW-0143">Chaperone</keyword>
<keyword id="KW-0903">Direct protein sequencing</keyword>
<keyword id="KW-0256">Endoplasmic reticulum</keyword>
<keyword id="KW-0472">Membrane</keyword>
<keyword id="KW-0653">Protein transport</keyword>
<keyword id="KW-1185">Reference proteome</keyword>
<keyword id="KW-0812">Transmembrane</keyword>
<keyword id="KW-0813">Transport</keyword>
<name>SEC63_CANLF</name>
<organism>
    <name type="scientific">Canis lupus familiaris</name>
    <name type="common">Dog</name>
    <name type="synonym">Canis familiaris</name>
    <dbReference type="NCBI Taxonomy" id="9615"/>
    <lineage>
        <taxon>Eukaryota</taxon>
        <taxon>Metazoa</taxon>
        <taxon>Chordata</taxon>
        <taxon>Craniata</taxon>
        <taxon>Vertebrata</taxon>
        <taxon>Euteleostomi</taxon>
        <taxon>Mammalia</taxon>
        <taxon>Eutheria</taxon>
        <taxon>Laurasiatheria</taxon>
        <taxon>Carnivora</taxon>
        <taxon>Caniformia</taxon>
        <taxon>Canidae</taxon>
        <taxon>Canis</taxon>
    </lineage>
</organism>
<evidence type="ECO:0000250" key="1">
    <source>
        <dbReference type="UniProtKB" id="Q8VHE0"/>
    </source>
</evidence>
<evidence type="ECO:0000250" key="2">
    <source>
        <dbReference type="UniProtKB" id="Q9UGP8"/>
    </source>
</evidence>
<evidence type="ECO:0000269" key="3">
    <source>
    </source>
</evidence>
<evidence type="ECO:0000305" key="4"/>
<dbReference type="InParanoid" id="P82008"/>
<dbReference type="OrthoDB" id="1734229at2759"/>
<dbReference type="Proteomes" id="UP000002254">
    <property type="component" value="Unplaced"/>
</dbReference>
<dbReference type="Proteomes" id="UP000694429">
    <property type="component" value="Unplaced"/>
</dbReference>
<dbReference type="Proteomes" id="UP000694542">
    <property type="component" value="Unplaced"/>
</dbReference>
<dbReference type="Proteomes" id="UP000805418">
    <property type="component" value="Unplaced"/>
</dbReference>
<dbReference type="GO" id="GO:0005789">
    <property type="term" value="C:endoplasmic reticulum membrane"/>
    <property type="evidence" value="ECO:0007669"/>
    <property type="project" value="UniProtKB-SubCell"/>
</dbReference>
<dbReference type="GO" id="GO:0031204">
    <property type="term" value="P:post-translational protein targeting to membrane, translocation"/>
    <property type="evidence" value="ECO:0000250"/>
    <property type="project" value="UniProtKB"/>
</dbReference>
<proteinExistence type="evidence at protein level"/>
<accession>P82008</accession>
<feature type="chain" id="PRO_0000071096" description="Translocation protein SEC63 homolog">
    <location>
        <begin position="1"/>
        <end position="33" status="greater than"/>
    </location>
</feature>
<feature type="non-consecutive residues" evidence="4">
    <location>
        <begin position="18"/>
        <end position="19"/>
    </location>
</feature>
<feature type="non-terminal residue">
    <location>
        <position position="33"/>
    </location>
</feature>